<proteinExistence type="inferred from homology"/>
<evidence type="ECO:0000250" key="1"/>
<evidence type="ECO:0000255" key="2">
    <source>
        <dbReference type="PROSITE-ProRule" id="PRU00156"/>
    </source>
</evidence>
<evidence type="ECO:0000255" key="3">
    <source>
        <dbReference type="PROSITE-ProRule" id="PRU00176"/>
    </source>
</evidence>
<evidence type="ECO:0000256" key="4">
    <source>
        <dbReference type="SAM" id="MobiDB-lite"/>
    </source>
</evidence>
<evidence type="ECO:0000305" key="5"/>
<feature type="chain" id="PRO_0000232978" description="Peptidyl-prolyl cis-trans isomerase-like 4">
    <location>
        <begin position="1"/>
        <end position="485"/>
    </location>
</feature>
<feature type="domain" description="PPIase cyclophilin-type" evidence="2">
    <location>
        <begin position="1"/>
        <end position="172"/>
    </location>
</feature>
<feature type="domain" description="RRM" evidence="3">
    <location>
        <begin position="251"/>
        <end position="329"/>
    </location>
</feature>
<feature type="region of interest" description="Disordered" evidence="4">
    <location>
        <begin position="377"/>
        <end position="485"/>
    </location>
</feature>
<feature type="compositionally biased region" description="Basic and acidic residues" evidence="4">
    <location>
        <begin position="426"/>
        <end position="485"/>
    </location>
</feature>
<accession>Q4IE79</accession>
<accession>A0A0E0S7M6</accession>
<accession>I1RKR3</accession>
<accession>V6R2Z7</accession>
<dbReference type="EC" id="5.2.1.8"/>
<dbReference type="EMBL" id="DS231664">
    <property type="protein sequence ID" value="ESU08619.1"/>
    <property type="molecule type" value="Genomic_DNA"/>
</dbReference>
<dbReference type="EMBL" id="HG970333">
    <property type="protein sequence ID" value="CEF79501.1"/>
    <property type="molecule type" value="Genomic_DNA"/>
</dbReference>
<dbReference type="RefSeq" id="XP_011321118.1">
    <property type="nucleotide sequence ID" value="XM_011322816.1"/>
</dbReference>
<dbReference type="SMR" id="Q4IE79"/>
<dbReference type="STRING" id="229533.Q4IE79"/>
<dbReference type="GeneID" id="23551728"/>
<dbReference type="KEGG" id="fgr:FGSG_04479"/>
<dbReference type="VEuPathDB" id="FungiDB:FGRAMPH1_01G15399"/>
<dbReference type="eggNOG" id="KOG0415">
    <property type="taxonomic scope" value="Eukaryota"/>
</dbReference>
<dbReference type="HOGENOM" id="CLU_018791_2_1_1"/>
<dbReference type="InParanoid" id="Q4IE79"/>
<dbReference type="OrthoDB" id="123541at110618"/>
<dbReference type="Proteomes" id="UP000070720">
    <property type="component" value="Chromosome 2"/>
</dbReference>
<dbReference type="GO" id="GO:0005634">
    <property type="term" value="C:nucleus"/>
    <property type="evidence" value="ECO:0007669"/>
    <property type="project" value="UniProtKB-SubCell"/>
</dbReference>
<dbReference type="GO" id="GO:0003755">
    <property type="term" value="F:peptidyl-prolyl cis-trans isomerase activity"/>
    <property type="evidence" value="ECO:0007669"/>
    <property type="project" value="UniProtKB-KW"/>
</dbReference>
<dbReference type="GO" id="GO:0003723">
    <property type="term" value="F:RNA binding"/>
    <property type="evidence" value="ECO:0007669"/>
    <property type="project" value="UniProtKB-KW"/>
</dbReference>
<dbReference type="CDD" id="cd01921">
    <property type="entry name" value="cyclophilin_RRM"/>
    <property type="match status" value="1"/>
</dbReference>
<dbReference type="CDD" id="cd12235">
    <property type="entry name" value="RRM_PPIL4"/>
    <property type="match status" value="1"/>
</dbReference>
<dbReference type="FunFam" id="2.40.100.10:FF:000015">
    <property type="entry name" value="Peptidyl-prolyl cis-trans isomerase"/>
    <property type="match status" value="1"/>
</dbReference>
<dbReference type="FunFam" id="3.30.70.330:FF:000287">
    <property type="entry name" value="Peptidyl-prolyl cis-trans isomerase"/>
    <property type="match status" value="1"/>
</dbReference>
<dbReference type="Gene3D" id="3.30.70.330">
    <property type="match status" value="1"/>
</dbReference>
<dbReference type="Gene3D" id="2.40.100.10">
    <property type="entry name" value="Cyclophilin-like"/>
    <property type="match status" value="1"/>
</dbReference>
<dbReference type="InterPro" id="IPR035542">
    <property type="entry name" value="CRIP"/>
</dbReference>
<dbReference type="InterPro" id="IPR029000">
    <property type="entry name" value="Cyclophilin-like_dom_sf"/>
</dbReference>
<dbReference type="InterPro" id="IPR002130">
    <property type="entry name" value="Cyclophilin-type_PPIase_dom"/>
</dbReference>
<dbReference type="InterPro" id="IPR035538">
    <property type="entry name" value="Cyclophilin_PPIL4"/>
</dbReference>
<dbReference type="InterPro" id="IPR012677">
    <property type="entry name" value="Nucleotide-bd_a/b_plait_sf"/>
</dbReference>
<dbReference type="InterPro" id="IPR035979">
    <property type="entry name" value="RBD_domain_sf"/>
</dbReference>
<dbReference type="InterPro" id="IPR000504">
    <property type="entry name" value="RRM_dom"/>
</dbReference>
<dbReference type="PANTHER" id="PTHR45843">
    <property type="entry name" value="PEPTIDYL-PROLYL CIS-TRANS ISOMERASE-LIKE 4"/>
    <property type="match status" value="1"/>
</dbReference>
<dbReference type="PANTHER" id="PTHR45843:SF1">
    <property type="entry name" value="PEPTIDYL-PROLYL CIS-TRANS ISOMERASE-LIKE 4"/>
    <property type="match status" value="1"/>
</dbReference>
<dbReference type="Pfam" id="PF00160">
    <property type="entry name" value="Pro_isomerase"/>
    <property type="match status" value="1"/>
</dbReference>
<dbReference type="Pfam" id="PF00076">
    <property type="entry name" value="RRM_1"/>
    <property type="match status" value="1"/>
</dbReference>
<dbReference type="PRINTS" id="PR00153">
    <property type="entry name" value="CSAPPISMRASE"/>
</dbReference>
<dbReference type="SMART" id="SM00360">
    <property type="entry name" value="RRM"/>
    <property type="match status" value="1"/>
</dbReference>
<dbReference type="SUPFAM" id="SSF50891">
    <property type="entry name" value="Cyclophilin-like"/>
    <property type="match status" value="1"/>
</dbReference>
<dbReference type="SUPFAM" id="SSF54928">
    <property type="entry name" value="RNA-binding domain, RBD"/>
    <property type="match status" value="1"/>
</dbReference>
<dbReference type="PROSITE" id="PS50072">
    <property type="entry name" value="CSA_PPIASE_2"/>
    <property type="match status" value="1"/>
</dbReference>
<dbReference type="PROSITE" id="PS50102">
    <property type="entry name" value="RRM"/>
    <property type="match status" value="1"/>
</dbReference>
<keyword id="KW-0413">Isomerase</keyword>
<keyword id="KW-0539">Nucleus</keyword>
<keyword id="KW-1185">Reference proteome</keyword>
<keyword id="KW-0694">RNA-binding</keyword>
<keyword id="KW-0697">Rotamase</keyword>
<sequence>MSVLLETSAGDIVIDLLVDHAPKLCENFLKLCKVKYYNFSPVHSVQKNFSFQTGDPLGPLSKDSDGGSSIWGHLSGDPSERTFPAFFHPKLKHLERGTVSMATAPLQSDPDVRVAGSQFIITLGQDTDFLDGKAAIFGKVVEGFEALDKINEAIVDEKGHPLIDIRIKHTVILDDPYADPPGLREPSTSPPPTDQQLKTVRIADEAALHEDDNVDEEELERRRRNREAQAQALTLEMMGDLPFAEVKPPENVLFVCKLNPVTGDEDLELIFGRFGKILSCEVIRDQKTGDSLQYAFIEYEDKASCEAAYFKMQGVLIDDRRIHVDFSQSVSKLSDVWRKDTNSKRRTNAGRGGWGGVDELEKRRQYRDEGERVTGGNYRMVYGEEEMKGKVGRNAPKQDKDDGPPPPGPRDNGEPSRQQNRSRSPRPRDRSRDRYHKPRDDRRGDRRDRDRRDQDRNRYRDRDHRDRGREKDRYGRDENDRRSRR</sequence>
<gene>
    <name type="primary">CYP6</name>
    <name type="ORF">FGRRES_04479</name>
    <name type="ORF">FGSG_04479</name>
</gene>
<name>PPIL4_GIBZE</name>
<organism>
    <name type="scientific">Gibberella zeae (strain ATCC MYA-4620 / CBS 123657 / FGSC 9075 / NRRL 31084 / PH-1)</name>
    <name type="common">Wheat head blight fungus</name>
    <name type="synonym">Fusarium graminearum</name>
    <dbReference type="NCBI Taxonomy" id="229533"/>
    <lineage>
        <taxon>Eukaryota</taxon>
        <taxon>Fungi</taxon>
        <taxon>Dikarya</taxon>
        <taxon>Ascomycota</taxon>
        <taxon>Pezizomycotina</taxon>
        <taxon>Sordariomycetes</taxon>
        <taxon>Hypocreomycetidae</taxon>
        <taxon>Hypocreales</taxon>
        <taxon>Nectriaceae</taxon>
        <taxon>Fusarium</taxon>
    </lineage>
</organism>
<reference key="1">
    <citation type="journal article" date="2007" name="Science">
        <title>The Fusarium graminearum genome reveals a link between localized polymorphism and pathogen specialization.</title>
        <authorList>
            <person name="Cuomo C.A."/>
            <person name="Gueldener U."/>
            <person name="Xu J.-R."/>
            <person name="Trail F."/>
            <person name="Turgeon B.G."/>
            <person name="Di Pietro A."/>
            <person name="Walton J.D."/>
            <person name="Ma L.-J."/>
            <person name="Baker S.E."/>
            <person name="Rep M."/>
            <person name="Adam G."/>
            <person name="Antoniw J."/>
            <person name="Baldwin T."/>
            <person name="Calvo S.E."/>
            <person name="Chang Y.-L."/>
            <person name="DeCaprio D."/>
            <person name="Gale L.R."/>
            <person name="Gnerre S."/>
            <person name="Goswami R.S."/>
            <person name="Hammond-Kosack K."/>
            <person name="Harris L.J."/>
            <person name="Hilburn K."/>
            <person name="Kennell J.C."/>
            <person name="Kroken S."/>
            <person name="Magnuson J.K."/>
            <person name="Mannhaupt G."/>
            <person name="Mauceli E.W."/>
            <person name="Mewes H.-W."/>
            <person name="Mitterbauer R."/>
            <person name="Muehlbauer G."/>
            <person name="Muensterkoetter M."/>
            <person name="Nelson D."/>
            <person name="O'Donnell K."/>
            <person name="Ouellet T."/>
            <person name="Qi W."/>
            <person name="Quesneville H."/>
            <person name="Roncero M.I.G."/>
            <person name="Seong K.-Y."/>
            <person name="Tetko I.V."/>
            <person name="Urban M."/>
            <person name="Waalwijk C."/>
            <person name="Ward T.J."/>
            <person name="Yao J."/>
            <person name="Birren B.W."/>
            <person name="Kistler H.C."/>
        </authorList>
    </citation>
    <scope>NUCLEOTIDE SEQUENCE [LARGE SCALE GENOMIC DNA]</scope>
    <source>
        <strain>ATCC MYA-4620 / CBS 123657 / FGSC 9075 / NRRL 31084 / PH-1</strain>
    </source>
</reference>
<reference key="2">
    <citation type="journal article" date="2010" name="Nature">
        <title>Comparative genomics reveals mobile pathogenicity chromosomes in Fusarium.</title>
        <authorList>
            <person name="Ma L.-J."/>
            <person name="van der Does H.C."/>
            <person name="Borkovich K.A."/>
            <person name="Coleman J.J."/>
            <person name="Daboussi M.-J."/>
            <person name="Di Pietro A."/>
            <person name="Dufresne M."/>
            <person name="Freitag M."/>
            <person name="Grabherr M."/>
            <person name="Henrissat B."/>
            <person name="Houterman P.M."/>
            <person name="Kang S."/>
            <person name="Shim W.-B."/>
            <person name="Woloshuk C."/>
            <person name="Xie X."/>
            <person name="Xu J.-R."/>
            <person name="Antoniw J."/>
            <person name="Baker S.E."/>
            <person name="Bluhm B.H."/>
            <person name="Breakspear A."/>
            <person name="Brown D.W."/>
            <person name="Butchko R.A.E."/>
            <person name="Chapman S."/>
            <person name="Coulson R."/>
            <person name="Coutinho P.M."/>
            <person name="Danchin E.G.J."/>
            <person name="Diener A."/>
            <person name="Gale L.R."/>
            <person name="Gardiner D.M."/>
            <person name="Goff S."/>
            <person name="Hammond-Kosack K.E."/>
            <person name="Hilburn K."/>
            <person name="Hua-Van A."/>
            <person name="Jonkers W."/>
            <person name="Kazan K."/>
            <person name="Kodira C.D."/>
            <person name="Koehrsen M."/>
            <person name="Kumar L."/>
            <person name="Lee Y.-H."/>
            <person name="Li L."/>
            <person name="Manners J.M."/>
            <person name="Miranda-Saavedra D."/>
            <person name="Mukherjee M."/>
            <person name="Park G."/>
            <person name="Park J."/>
            <person name="Park S.-Y."/>
            <person name="Proctor R.H."/>
            <person name="Regev A."/>
            <person name="Ruiz-Roldan M.C."/>
            <person name="Sain D."/>
            <person name="Sakthikumar S."/>
            <person name="Sykes S."/>
            <person name="Schwartz D.C."/>
            <person name="Turgeon B.G."/>
            <person name="Wapinski I."/>
            <person name="Yoder O."/>
            <person name="Young S."/>
            <person name="Zeng Q."/>
            <person name="Zhou S."/>
            <person name="Galagan J."/>
            <person name="Cuomo C.A."/>
            <person name="Kistler H.C."/>
            <person name="Rep M."/>
        </authorList>
    </citation>
    <scope>GENOME REANNOTATION</scope>
    <source>
        <strain>ATCC MYA-4620 / CBS 123657 / FGSC 9075 / NRRL 31084 / PH-1</strain>
    </source>
</reference>
<reference key="3">
    <citation type="journal article" date="2015" name="BMC Genomics">
        <title>The completed genome sequence of the pathogenic ascomycete fungus Fusarium graminearum.</title>
        <authorList>
            <person name="King R."/>
            <person name="Urban M."/>
            <person name="Hammond-Kosack M.C.U."/>
            <person name="Hassani-Pak K."/>
            <person name="Hammond-Kosack K.E."/>
        </authorList>
    </citation>
    <scope>NUCLEOTIDE SEQUENCE [LARGE SCALE GENOMIC DNA]</scope>
    <source>
        <strain>ATCC MYA-4620 / CBS 123657 / FGSC 9075 / NRRL 31084 / PH-1</strain>
    </source>
</reference>
<comment type="function">
    <text evidence="1">PPIases accelerate the folding of proteins. It catalyzes the cis-trans isomerization of proline imidic peptide bonds in oligopeptides (By similarity).</text>
</comment>
<comment type="catalytic activity">
    <reaction>
        <text>[protein]-peptidylproline (omega=180) = [protein]-peptidylproline (omega=0)</text>
        <dbReference type="Rhea" id="RHEA:16237"/>
        <dbReference type="Rhea" id="RHEA-COMP:10747"/>
        <dbReference type="Rhea" id="RHEA-COMP:10748"/>
        <dbReference type="ChEBI" id="CHEBI:83833"/>
        <dbReference type="ChEBI" id="CHEBI:83834"/>
        <dbReference type="EC" id="5.2.1.8"/>
    </reaction>
</comment>
<comment type="subcellular location">
    <subcellularLocation>
        <location evidence="1">Nucleus</location>
    </subcellularLocation>
</comment>
<comment type="similarity">
    <text evidence="5">Belongs to the cyclophilin-type PPIase family. PPIL4 subfamily.</text>
</comment>
<protein>
    <recommendedName>
        <fullName>Peptidyl-prolyl cis-trans isomerase-like 4</fullName>
        <shortName>PPIase</shortName>
        <ecNumber>5.2.1.8</ecNumber>
    </recommendedName>
    <alternativeName>
        <fullName>Rotamase</fullName>
    </alternativeName>
</protein>